<comment type="function">
    <text evidence="1">NDH-1 shuttles electrons from NAD(P)H, via FMN and iron-sulfur (Fe-S) centers, to quinones in the respiratory chain. The immediate electron acceptor for the enzyme in this species is believed to be plastoquinone. Couples the redox reaction to proton translocation (for every two electrons transferred, four hydrogen ions are translocated across the cytoplasmic membrane), and thus conserves the redox energy in a proton gradient.</text>
</comment>
<comment type="catalytic activity">
    <reaction evidence="1">
        <text>a plastoquinone + NADH + (n+1) H(+)(in) = a plastoquinol + NAD(+) + n H(+)(out)</text>
        <dbReference type="Rhea" id="RHEA:42608"/>
        <dbReference type="Rhea" id="RHEA-COMP:9561"/>
        <dbReference type="Rhea" id="RHEA-COMP:9562"/>
        <dbReference type="ChEBI" id="CHEBI:15378"/>
        <dbReference type="ChEBI" id="CHEBI:17757"/>
        <dbReference type="ChEBI" id="CHEBI:57540"/>
        <dbReference type="ChEBI" id="CHEBI:57945"/>
        <dbReference type="ChEBI" id="CHEBI:62192"/>
    </reaction>
</comment>
<comment type="catalytic activity">
    <reaction evidence="1">
        <text>a plastoquinone + NADPH + (n+1) H(+)(in) = a plastoquinol + NADP(+) + n H(+)(out)</text>
        <dbReference type="Rhea" id="RHEA:42612"/>
        <dbReference type="Rhea" id="RHEA-COMP:9561"/>
        <dbReference type="Rhea" id="RHEA-COMP:9562"/>
        <dbReference type="ChEBI" id="CHEBI:15378"/>
        <dbReference type="ChEBI" id="CHEBI:17757"/>
        <dbReference type="ChEBI" id="CHEBI:57783"/>
        <dbReference type="ChEBI" id="CHEBI:58349"/>
        <dbReference type="ChEBI" id="CHEBI:62192"/>
    </reaction>
</comment>
<comment type="subcellular location">
    <subcellularLocation>
        <location evidence="1">Cellular thylakoid membrane</location>
        <topology evidence="1">Multi-pass membrane protein</topology>
    </subcellularLocation>
</comment>
<comment type="similarity">
    <text evidence="1">Belongs to the complex I subunit 4 family.</text>
</comment>
<name>NU4C_SYNR3</name>
<feature type="chain" id="PRO_0000343261" description="NAD(P)H-quinone oxidoreductase chain 4">
    <location>
        <begin position="1"/>
        <end position="544"/>
    </location>
</feature>
<feature type="transmembrane region" description="Helical" evidence="1">
    <location>
        <begin position="29"/>
        <end position="49"/>
    </location>
</feature>
<feature type="transmembrane region" description="Helical" evidence="1">
    <location>
        <begin position="60"/>
        <end position="80"/>
    </location>
</feature>
<feature type="transmembrane region" description="Helical" evidence="1">
    <location>
        <begin position="115"/>
        <end position="135"/>
    </location>
</feature>
<feature type="transmembrane region" description="Helical" evidence="1">
    <location>
        <begin position="139"/>
        <end position="159"/>
    </location>
</feature>
<feature type="transmembrane region" description="Helical" evidence="1">
    <location>
        <begin position="161"/>
        <end position="181"/>
    </location>
</feature>
<feature type="transmembrane region" description="Helical" evidence="1">
    <location>
        <begin position="193"/>
        <end position="213"/>
    </location>
</feature>
<feature type="transmembrane region" description="Helical" evidence="1">
    <location>
        <begin position="234"/>
        <end position="254"/>
    </location>
</feature>
<feature type="transmembrane region" description="Helical" evidence="1">
    <location>
        <begin position="268"/>
        <end position="288"/>
    </location>
</feature>
<feature type="transmembrane region" description="Helical" evidence="1">
    <location>
        <begin position="302"/>
        <end position="322"/>
    </location>
</feature>
<feature type="transmembrane region" description="Helical" evidence="1">
    <location>
        <begin position="339"/>
        <end position="359"/>
    </location>
</feature>
<feature type="transmembrane region" description="Helical" evidence="1">
    <location>
        <begin position="360"/>
        <end position="380"/>
    </location>
</feature>
<feature type="transmembrane region" description="Helical" evidence="1">
    <location>
        <begin position="400"/>
        <end position="422"/>
    </location>
</feature>
<feature type="transmembrane region" description="Helical" evidence="1">
    <location>
        <begin position="442"/>
        <end position="462"/>
    </location>
</feature>
<feature type="transmembrane region" description="Helical" evidence="1">
    <location>
        <begin position="488"/>
        <end position="508"/>
    </location>
</feature>
<keyword id="KW-0472">Membrane</keyword>
<keyword id="KW-0520">NAD</keyword>
<keyword id="KW-0521">NADP</keyword>
<keyword id="KW-0618">Plastoquinone</keyword>
<keyword id="KW-0874">Quinone</keyword>
<keyword id="KW-1185">Reference proteome</keyword>
<keyword id="KW-0793">Thylakoid</keyword>
<keyword id="KW-1278">Translocase</keyword>
<keyword id="KW-0812">Transmembrane</keyword>
<keyword id="KW-1133">Transmembrane helix</keyword>
<accession>A5GQH5</accession>
<proteinExistence type="inferred from homology"/>
<reference key="1">
    <citation type="submission" date="2006-05" db="EMBL/GenBank/DDBJ databases">
        <authorList>
            <consortium name="Genoscope"/>
        </authorList>
    </citation>
    <scope>NUCLEOTIDE SEQUENCE [LARGE SCALE GENOMIC DNA]</scope>
    <source>
        <strain>RCC307</strain>
    </source>
</reference>
<evidence type="ECO:0000255" key="1">
    <source>
        <dbReference type="HAMAP-Rule" id="MF_00491"/>
    </source>
</evidence>
<dbReference type="EC" id="7.1.1.-" evidence="1"/>
<dbReference type="EMBL" id="CT978603">
    <property type="protein sequence ID" value="CAK27134.1"/>
    <property type="molecule type" value="Genomic_DNA"/>
</dbReference>
<dbReference type="SMR" id="A5GQH5"/>
<dbReference type="STRING" id="316278.SynRCC307_0231"/>
<dbReference type="KEGG" id="syr:SynRCC307_0231"/>
<dbReference type="eggNOG" id="COG1008">
    <property type="taxonomic scope" value="Bacteria"/>
</dbReference>
<dbReference type="HOGENOM" id="CLU_007100_4_0_3"/>
<dbReference type="Proteomes" id="UP000001115">
    <property type="component" value="Chromosome"/>
</dbReference>
<dbReference type="GO" id="GO:0031676">
    <property type="term" value="C:plasma membrane-derived thylakoid membrane"/>
    <property type="evidence" value="ECO:0007669"/>
    <property type="project" value="UniProtKB-SubCell"/>
</dbReference>
<dbReference type="GO" id="GO:0008137">
    <property type="term" value="F:NADH dehydrogenase (ubiquinone) activity"/>
    <property type="evidence" value="ECO:0007669"/>
    <property type="project" value="InterPro"/>
</dbReference>
<dbReference type="GO" id="GO:0048039">
    <property type="term" value="F:ubiquinone binding"/>
    <property type="evidence" value="ECO:0007669"/>
    <property type="project" value="TreeGrafter"/>
</dbReference>
<dbReference type="GO" id="GO:0042773">
    <property type="term" value="P:ATP synthesis coupled electron transport"/>
    <property type="evidence" value="ECO:0007669"/>
    <property type="project" value="InterPro"/>
</dbReference>
<dbReference type="GO" id="GO:0015990">
    <property type="term" value="P:electron transport coupled proton transport"/>
    <property type="evidence" value="ECO:0007669"/>
    <property type="project" value="TreeGrafter"/>
</dbReference>
<dbReference type="HAMAP" id="MF_00491">
    <property type="entry name" value="NDH1_NuoM"/>
    <property type="match status" value="1"/>
</dbReference>
<dbReference type="InterPro" id="IPR022997">
    <property type="entry name" value="NADH_Q_OxRdtase_chain4"/>
</dbReference>
<dbReference type="InterPro" id="IPR010227">
    <property type="entry name" value="NADH_Q_OxRdtase_chainM/4"/>
</dbReference>
<dbReference type="InterPro" id="IPR003918">
    <property type="entry name" value="NADH_UbQ_OxRdtase"/>
</dbReference>
<dbReference type="InterPro" id="IPR001750">
    <property type="entry name" value="ND/Mrp_TM"/>
</dbReference>
<dbReference type="NCBIfam" id="TIGR01972">
    <property type="entry name" value="NDH_I_M"/>
    <property type="match status" value="1"/>
</dbReference>
<dbReference type="NCBIfam" id="NF002713">
    <property type="entry name" value="PRK02546.1"/>
    <property type="match status" value="1"/>
</dbReference>
<dbReference type="NCBIfam" id="NF009212">
    <property type="entry name" value="PRK12561.1"/>
    <property type="match status" value="1"/>
</dbReference>
<dbReference type="PANTHER" id="PTHR43507:SF21">
    <property type="entry name" value="NAD(P)H-QUINONE OXIDOREDUCTASE CHAIN 4, CHLOROPLASTIC"/>
    <property type="match status" value="1"/>
</dbReference>
<dbReference type="PANTHER" id="PTHR43507">
    <property type="entry name" value="NADH-UBIQUINONE OXIDOREDUCTASE CHAIN 4"/>
    <property type="match status" value="1"/>
</dbReference>
<dbReference type="Pfam" id="PF00361">
    <property type="entry name" value="Proton_antipo_M"/>
    <property type="match status" value="1"/>
</dbReference>
<dbReference type="PRINTS" id="PR01437">
    <property type="entry name" value="NUOXDRDTASE4"/>
</dbReference>
<sequence length="544" mass="58530">MCVKGDAQLAAAAEISTLQPDAAKELDSFPWLTTAILLPIAASLAIPLVPDPGNGKGVRWYALGVSLTTFLITVGAYLNGYDPDIAGLQLRQVIPWVPDLGLGWSVGADGLSMPLILLTSFITTLACLAAWPVTFKPRLFFFLLLAMDGGQIAVFAVQDMLLFFLAWELELIPVYLLLAIWGGKKRQYAATKFILYTAVSSLFILLVALAMAFSGGGPVSFEYSDLAAKHLGAGFQALCYAGLLIAFGVKLPIVPLHTWLPDAHGEATAPVHMLLAGILLKMGGYALFRFNASMFPDAHVQFAPLLVVLGVVNIIYAALTSFAQRNLKRKIAYSSISHMGFVLIGIGSFSPLAASGAMLQMISHGLIGASLFFLVGATYDRTHTLQLDEMGGVGQRMRKMFAMWTACSLASLALPGMSGFVSELMVFVGFATDDAYTLPFRIVIDGAAAIGVILTPIYLLSMLREIFFGQEKPELSDANLVDAEPREIYIISCLLVPIIGIGLYPKLVTDSYRATIEQVVARDESSMKALTAPYLPLRSAPKLS</sequence>
<gene>
    <name evidence="1" type="primary">ndhD</name>
    <name type="ordered locus">SynRCC307_0231</name>
</gene>
<organism>
    <name type="scientific">Synechococcus sp. (strain RCC307)</name>
    <dbReference type="NCBI Taxonomy" id="316278"/>
    <lineage>
        <taxon>Bacteria</taxon>
        <taxon>Bacillati</taxon>
        <taxon>Cyanobacteriota</taxon>
        <taxon>Cyanophyceae</taxon>
        <taxon>Synechococcales</taxon>
        <taxon>Synechococcaceae</taxon>
        <taxon>Synechococcus</taxon>
    </lineage>
</organism>
<protein>
    <recommendedName>
        <fullName evidence="1">NAD(P)H-quinone oxidoreductase chain 4</fullName>
        <ecNumber evidence="1">7.1.1.-</ecNumber>
    </recommendedName>
    <alternativeName>
        <fullName evidence="1">NAD(P)H dehydrogenase I, chain 4</fullName>
    </alternativeName>
    <alternativeName>
        <fullName evidence="1">NDH-1, chain 4</fullName>
    </alternativeName>
</protein>